<proteinExistence type="inferred from homology"/>
<comment type="function">
    <text evidence="1">NDH-1 shuttles electrons from NADH, via FMN and iron-sulfur (Fe-S) centers, to quinones in the respiratory chain. The immediate electron acceptor for the enzyme in this species is believed to be a menaquinone. Couples the redox reaction to proton translocation (for every two electrons transferred, four hydrogen ions are translocated across the cytoplasmic membrane), and thus conserves the redox energy in a proton gradient.</text>
</comment>
<comment type="catalytic activity">
    <reaction evidence="1">
        <text>a quinone + NADH + 5 H(+)(in) = a quinol + NAD(+) + 4 H(+)(out)</text>
        <dbReference type="Rhea" id="RHEA:57888"/>
        <dbReference type="ChEBI" id="CHEBI:15378"/>
        <dbReference type="ChEBI" id="CHEBI:24646"/>
        <dbReference type="ChEBI" id="CHEBI:57540"/>
        <dbReference type="ChEBI" id="CHEBI:57945"/>
        <dbReference type="ChEBI" id="CHEBI:132124"/>
    </reaction>
</comment>
<comment type="subunit">
    <text evidence="1">NDH-1 is composed of 14 different subunits. Subunits NuoA, H, J, K, L, M, N constitute the membrane sector of the complex.</text>
</comment>
<comment type="subcellular location">
    <subcellularLocation>
        <location evidence="1">Cell membrane</location>
        <topology evidence="1">Multi-pass membrane protein</topology>
    </subcellularLocation>
</comment>
<comment type="similarity">
    <text evidence="1">Belongs to the complex I subunit 4L family.</text>
</comment>
<accession>B9IRS5</accession>
<sequence length="104" mass="11046">MSSVPASAYLTLAIILFCIGLFGALTKRNTVIVLVCIELMLNAANLNLVAFSKLGLFPNVTGQIFSLFTMAVAAAEAAVGLAILIALYRNRTTVHVDEMDTLKG</sequence>
<gene>
    <name evidence="1" type="primary">nuoK</name>
    <name type="ordered locus">BCQ_5133</name>
</gene>
<reference key="1">
    <citation type="journal article" date="2009" name="J. Bacteriol.">
        <title>Complete genome sequence of the extremophilic Bacillus cereus strain Q1 with industrial applications.</title>
        <authorList>
            <person name="Xiong Z."/>
            <person name="Jiang Y."/>
            <person name="Qi D."/>
            <person name="Lu H."/>
            <person name="Yang F."/>
            <person name="Yang J."/>
            <person name="Chen L."/>
            <person name="Sun L."/>
            <person name="Xu X."/>
            <person name="Xue Y."/>
            <person name="Zhu Y."/>
            <person name="Jin Q."/>
        </authorList>
    </citation>
    <scope>NUCLEOTIDE SEQUENCE [LARGE SCALE GENOMIC DNA]</scope>
    <source>
        <strain>Q1</strain>
    </source>
</reference>
<name>NUOK_BACCQ</name>
<feature type="chain" id="PRO_0000389947" description="NADH-quinone oxidoreductase subunit K">
    <location>
        <begin position="1"/>
        <end position="104"/>
    </location>
</feature>
<feature type="transmembrane region" description="Helical" evidence="1">
    <location>
        <begin position="4"/>
        <end position="24"/>
    </location>
</feature>
<feature type="transmembrane region" description="Helical" evidence="1">
    <location>
        <begin position="31"/>
        <end position="51"/>
    </location>
</feature>
<feature type="transmembrane region" description="Helical" evidence="1">
    <location>
        <begin position="67"/>
        <end position="87"/>
    </location>
</feature>
<dbReference type="EC" id="7.1.1.-" evidence="1"/>
<dbReference type="EMBL" id="CP000227">
    <property type="protein sequence ID" value="ACM15533.1"/>
    <property type="molecule type" value="Genomic_DNA"/>
</dbReference>
<dbReference type="SMR" id="B9IRS5"/>
<dbReference type="KEGG" id="bcq:BCQ_5133"/>
<dbReference type="HOGENOM" id="CLU_144724_0_0_9"/>
<dbReference type="Proteomes" id="UP000000441">
    <property type="component" value="Chromosome"/>
</dbReference>
<dbReference type="GO" id="GO:0030964">
    <property type="term" value="C:NADH dehydrogenase complex"/>
    <property type="evidence" value="ECO:0007669"/>
    <property type="project" value="TreeGrafter"/>
</dbReference>
<dbReference type="GO" id="GO:0005886">
    <property type="term" value="C:plasma membrane"/>
    <property type="evidence" value="ECO:0007669"/>
    <property type="project" value="UniProtKB-SubCell"/>
</dbReference>
<dbReference type="GO" id="GO:0050136">
    <property type="term" value="F:NADH:ubiquinone reductase (non-electrogenic) activity"/>
    <property type="evidence" value="ECO:0007669"/>
    <property type="project" value="UniProtKB-UniRule"/>
</dbReference>
<dbReference type="GO" id="GO:0048038">
    <property type="term" value="F:quinone binding"/>
    <property type="evidence" value="ECO:0007669"/>
    <property type="project" value="UniProtKB-KW"/>
</dbReference>
<dbReference type="GO" id="GO:0042773">
    <property type="term" value="P:ATP synthesis coupled electron transport"/>
    <property type="evidence" value="ECO:0007669"/>
    <property type="project" value="InterPro"/>
</dbReference>
<dbReference type="FunFam" id="1.10.287.3510:FF:000001">
    <property type="entry name" value="NADH-quinone oxidoreductase subunit K"/>
    <property type="match status" value="1"/>
</dbReference>
<dbReference type="Gene3D" id="1.10.287.3510">
    <property type="match status" value="1"/>
</dbReference>
<dbReference type="HAMAP" id="MF_01456">
    <property type="entry name" value="NDH1_NuoK"/>
    <property type="match status" value="1"/>
</dbReference>
<dbReference type="InterPro" id="IPR001133">
    <property type="entry name" value="NADH_UbQ_OxRdtase_chain4L/K"/>
</dbReference>
<dbReference type="InterPro" id="IPR039428">
    <property type="entry name" value="NUOK/Mnh_C1-like"/>
</dbReference>
<dbReference type="NCBIfam" id="NF004320">
    <property type="entry name" value="PRK05715.1-2"/>
    <property type="match status" value="1"/>
</dbReference>
<dbReference type="NCBIfam" id="NF004321">
    <property type="entry name" value="PRK05715.1-3"/>
    <property type="match status" value="1"/>
</dbReference>
<dbReference type="NCBIfam" id="NF004322">
    <property type="entry name" value="PRK05715.1-4"/>
    <property type="match status" value="1"/>
</dbReference>
<dbReference type="NCBIfam" id="NF004323">
    <property type="entry name" value="PRK05715.1-5"/>
    <property type="match status" value="1"/>
</dbReference>
<dbReference type="PANTHER" id="PTHR11434:SF16">
    <property type="entry name" value="NADH-UBIQUINONE OXIDOREDUCTASE CHAIN 4L"/>
    <property type="match status" value="1"/>
</dbReference>
<dbReference type="PANTHER" id="PTHR11434">
    <property type="entry name" value="NADH-UBIQUINONE OXIDOREDUCTASE SUBUNIT ND4L"/>
    <property type="match status" value="1"/>
</dbReference>
<dbReference type="Pfam" id="PF00420">
    <property type="entry name" value="Oxidored_q2"/>
    <property type="match status" value="1"/>
</dbReference>
<organism>
    <name type="scientific">Bacillus cereus (strain Q1)</name>
    <dbReference type="NCBI Taxonomy" id="361100"/>
    <lineage>
        <taxon>Bacteria</taxon>
        <taxon>Bacillati</taxon>
        <taxon>Bacillota</taxon>
        <taxon>Bacilli</taxon>
        <taxon>Bacillales</taxon>
        <taxon>Bacillaceae</taxon>
        <taxon>Bacillus</taxon>
        <taxon>Bacillus cereus group</taxon>
    </lineage>
</organism>
<protein>
    <recommendedName>
        <fullName evidence="1">NADH-quinone oxidoreductase subunit K</fullName>
        <ecNumber evidence="1">7.1.1.-</ecNumber>
    </recommendedName>
    <alternativeName>
        <fullName evidence="1">NADH dehydrogenase I subunit K</fullName>
    </alternativeName>
    <alternativeName>
        <fullName evidence="1">NDH-1 subunit K</fullName>
    </alternativeName>
</protein>
<evidence type="ECO:0000255" key="1">
    <source>
        <dbReference type="HAMAP-Rule" id="MF_01456"/>
    </source>
</evidence>
<keyword id="KW-1003">Cell membrane</keyword>
<keyword id="KW-0472">Membrane</keyword>
<keyword id="KW-0520">NAD</keyword>
<keyword id="KW-0874">Quinone</keyword>
<keyword id="KW-1278">Translocase</keyword>
<keyword id="KW-0812">Transmembrane</keyword>
<keyword id="KW-1133">Transmembrane helix</keyword>
<keyword id="KW-0813">Transport</keyword>